<accession>B0KPI4</accession>
<gene>
    <name evidence="1" type="primary">rlmN</name>
    <name type="ordered locus">PputGB1_0893</name>
</gene>
<sequence>MTTSTGKINLLGLTQPEMEQFFDSIGEKRFRAGQVMKWIHHFGVSDFAAMTNVGKVLREKLEAVAEIRPPEVVSEDISADGTRKWVIRVASGSCVETVYIPTDDRGTLCVSSQAGCALDCSFCSTGKQGFNSNLTAAEVIGQVWLANKSFGTVPAKVDRAITNVVMMGMGEPLLNFDNVIAAMKIMMDDLGYGISKRRVTLSTSGVVPMIDELAKHIDVSLALSLHAPNDELRNKLVPINKKYPLKVLLESCMGYMSTLGGKRVLTVEYTLLKDVNDQPEHAAQMIELLRDVPCKINLIPFNPFPHSGYERPSNNAIRRFQDLLHHGGFNVTTRTTRGDDIDAACGQLVGQVNDRTRRSERYIAVRQLSADVELQDSAASH</sequence>
<reference key="1">
    <citation type="submission" date="2008-01" db="EMBL/GenBank/DDBJ databases">
        <title>Complete sequence of Pseudomonas putida GB-1.</title>
        <authorList>
            <consortium name="US DOE Joint Genome Institute"/>
            <person name="Copeland A."/>
            <person name="Lucas S."/>
            <person name="Lapidus A."/>
            <person name="Barry K."/>
            <person name="Glavina del Rio T."/>
            <person name="Dalin E."/>
            <person name="Tice H."/>
            <person name="Pitluck S."/>
            <person name="Bruce D."/>
            <person name="Goodwin L."/>
            <person name="Chertkov O."/>
            <person name="Brettin T."/>
            <person name="Detter J.C."/>
            <person name="Han C."/>
            <person name="Kuske C.R."/>
            <person name="Schmutz J."/>
            <person name="Larimer F."/>
            <person name="Land M."/>
            <person name="Hauser L."/>
            <person name="Kyrpides N."/>
            <person name="Kim E."/>
            <person name="McCarthy J.K."/>
            <person name="Richardson P."/>
        </authorList>
    </citation>
    <scope>NUCLEOTIDE SEQUENCE [LARGE SCALE GENOMIC DNA]</scope>
    <source>
        <strain>GB-1</strain>
    </source>
</reference>
<organism>
    <name type="scientific">Pseudomonas putida (strain GB-1)</name>
    <dbReference type="NCBI Taxonomy" id="76869"/>
    <lineage>
        <taxon>Bacteria</taxon>
        <taxon>Pseudomonadati</taxon>
        <taxon>Pseudomonadota</taxon>
        <taxon>Gammaproteobacteria</taxon>
        <taxon>Pseudomonadales</taxon>
        <taxon>Pseudomonadaceae</taxon>
        <taxon>Pseudomonas</taxon>
    </lineage>
</organism>
<evidence type="ECO:0000255" key="1">
    <source>
        <dbReference type="HAMAP-Rule" id="MF_01849"/>
    </source>
</evidence>
<evidence type="ECO:0000255" key="2">
    <source>
        <dbReference type="PROSITE-ProRule" id="PRU01266"/>
    </source>
</evidence>
<proteinExistence type="inferred from homology"/>
<name>RLMN_PSEPG</name>
<feature type="chain" id="PRO_0000350341" description="Dual-specificity RNA methyltransferase RlmN">
    <location>
        <begin position="1"/>
        <end position="381"/>
    </location>
</feature>
<feature type="domain" description="Radical SAM core" evidence="2">
    <location>
        <begin position="102"/>
        <end position="342"/>
    </location>
</feature>
<feature type="active site" description="Proton acceptor" evidence="1">
    <location>
        <position position="96"/>
    </location>
</feature>
<feature type="active site" description="S-methylcysteine intermediate" evidence="1">
    <location>
        <position position="345"/>
    </location>
</feature>
<feature type="binding site" evidence="1">
    <location>
        <position position="116"/>
    </location>
    <ligand>
        <name>[4Fe-4S] cluster</name>
        <dbReference type="ChEBI" id="CHEBI:49883"/>
        <note>4Fe-4S-S-AdoMet</note>
    </ligand>
</feature>
<feature type="binding site" evidence="1">
    <location>
        <position position="120"/>
    </location>
    <ligand>
        <name>[4Fe-4S] cluster</name>
        <dbReference type="ChEBI" id="CHEBI:49883"/>
        <note>4Fe-4S-S-AdoMet</note>
    </ligand>
</feature>
<feature type="binding site" evidence="1">
    <location>
        <position position="123"/>
    </location>
    <ligand>
        <name>[4Fe-4S] cluster</name>
        <dbReference type="ChEBI" id="CHEBI:49883"/>
        <note>4Fe-4S-S-AdoMet</note>
    </ligand>
</feature>
<feature type="binding site" evidence="1">
    <location>
        <begin position="170"/>
        <end position="171"/>
    </location>
    <ligand>
        <name>S-adenosyl-L-methionine</name>
        <dbReference type="ChEBI" id="CHEBI:59789"/>
    </ligand>
</feature>
<feature type="binding site" evidence="1">
    <location>
        <position position="202"/>
    </location>
    <ligand>
        <name>S-adenosyl-L-methionine</name>
        <dbReference type="ChEBI" id="CHEBI:59789"/>
    </ligand>
</feature>
<feature type="binding site" evidence="1">
    <location>
        <begin position="224"/>
        <end position="226"/>
    </location>
    <ligand>
        <name>S-adenosyl-L-methionine</name>
        <dbReference type="ChEBI" id="CHEBI:59789"/>
    </ligand>
</feature>
<feature type="binding site" evidence="1">
    <location>
        <position position="302"/>
    </location>
    <ligand>
        <name>S-adenosyl-L-methionine</name>
        <dbReference type="ChEBI" id="CHEBI:59789"/>
    </ligand>
</feature>
<feature type="disulfide bond" description="(transient)" evidence="1">
    <location>
        <begin position="109"/>
        <end position="345"/>
    </location>
</feature>
<protein>
    <recommendedName>
        <fullName evidence="1">Dual-specificity RNA methyltransferase RlmN</fullName>
        <ecNumber evidence="1">2.1.1.192</ecNumber>
    </recommendedName>
    <alternativeName>
        <fullName evidence="1">23S rRNA (adenine(2503)-C(2))-methyltransferase</fullName>
    </alternativeName>
    <alternativeName>
        <fullName evidence="1">23S rRNA m2A2503 methyltransferase</fullName>
    </alternativeName>
    <alternativeName>
        <fullName evidence="1">Ribosomal RNA large subunit methyltransferase N</fullName>
    </alternativeName>
    <alternativeName>
        <fullName evidence="1">tRNA (adenine(37)-C(2))-methyltransferase</fullName>
    </alternativeName>
    <alternativeName>
        <fullName evidence="1">tRNA m2A37 methyltransferase</fullName>
    </alternativeName>
</protein>
<keyword id="KW-0004">4Fe-4S</keyword>
<keyword id="KW-0963">Cytoplasm</keyword>
<keyword id="KW-1015">Disulfide bond</keyword>
<keyword id="KW-0408">Iron</keyword>
<keyword id="KW-0411">Iron-sulfur</keyword>
<keyword id="KW-0479">Metal-binding</keyword>
<keyword id="KW-0489">Methyltransferase</keyword>
<keyword id="KW-0698">rRNA processing</keyword>
<keyword id="KW-0949">S-adenosyl-L-methionine</keyword>
<keyword id="KW-0808">Transferase</keyword>
<keyword id="KW-0819">tRNA processing</keyword>
<dbReference type="EC" id="2.1.1.192" evidence="1"/>
<dbReference type="EMBL" id="CP000926">
    <property type="protein sequence ID" value="ABY96803.1"/>
    <property type="molecule type" value="Genomic_DNA"/>
</dbReference>
<dbReference type="RefSeq" id="WP_012270596.1">
    <property type="nucleotide sequence ID" value="NC_010322.1"/>
</dbReference>
<dbReference type="SMR" id="B0KPI4"/>
<dbReference type="GeneID" id="83668147"/>
<dbReference type="KEGG" id="ppg:PputGB1_0893"/>
<dbReference type="eggNOG" id="COG0820">
    <property type="taxonomic scope" value="Bacteria"/>
</dbReference>
<dbReference type="HOGENOM" id="CLU_029101_0_0_6"/>
<dbReference type="Proteomes" id="UP000002157">
    <property type="component" value="Chromosome"/>
</dbReference>
<dbReference type="GO" id="GO:0005737">
    <property type="term" value="C:cytoplasm"/>
    <property type="evidence" value="ECO:0007669"/>
    <property type="project" value="UniProtKB-SubCell"/>
</dbReference>
<dbReference type="GO" id="GO:0051539">
    <property type="term" value="F:4 iron, 4 sulfur cluster binding"/>
    <property type="evidence" value="ECO:0007669"/>
    <property type="project" value="UniProtKB-UniRule"/>
</dbReference>
<dbReference type="GO" id="GO:0046872">
    <property type="term" value="F:metal ion binding"/>
    <property type="evidence" value="ECO:0007669"/>
    <property type="project" value="UniProtKB-KW"/>
</dbReference>
<dbReference type="GO" id="GO:0070040">
    <property type="term" value="F:rRNA (adenine(2503)-C2-)-methyltransferase activity"/>
    <property type="evidence" value="ECO:0007669"/>
    <property type="project" value="UniProtKB-UniRule"/>
</dbReference>
<dbReference type="GO" id="GO:0019843">
    <property type="term" value="F:rRNA binding"/>
    <property type="evidence" value="ECO:0007669"/>
    <property type="project" value="UniProtKB-UniRule"/>
</dbReference>
<dbReference type="GO" id="GO:0002935">
    <property type="term" value="F:tRNA (adenine(37)-C2)-methyltransferase activity"/>
    <property type="evidence" value="ECO:0007669"/>
    <property type="project" value="UniProtKB-UniRule"/>
</dbReference>
<dbReference type="GO" id="GO:0000049">
    <property type="term" value="F:tRNA binding"/>
    <property type="evidence" value="ECO:0007669"/>
    <property type="project" value="UniProtKB-UniRule"/>
</dbReference>
<dbReference type="GO" id="GO:0070475">
    <property type="term" value="P:rRNA base methylation"/>
    <property type="evidence" value="ECO:0007669"/>
    <property type="project" value="UniProtKB-UniRule"/>
</dbReference>
<dbReference type="GO" id="GO:0030488">
    <property type="term" value="P:tRNA methylation"/>
    <property type="evidence" value="ECO:0007669"/>
    <property type="project" value="UniProtKB-UniRule"/>
</dbReference>
<dbReference type="CDD" id="cd01335">
    <property type="entry name" value="Radical_SAM"/>
    <property type="match status" value="1"/>
</dbReference>
<dbReference type="FunFam" id="1.10.150.530:FF:000003">
    <property type="entry name" value="Dual-specificity RNA methyltransferase RlmN"/>
    <property type="match status" value="1"/>
</dbReference>
<dbReference type="FunFam" id="3.20.20.70:FF:000008">
    <property type="entry name" value="Dual-specificity RNA methyltransferase RlmN"/>
    <property type="match status" value="1"/>
</dbReference>
<dbReference type="Gene3D" id="1.10.150.530">
    <property type="match status" value="1"/>
</dbReference>
<dbReference type="Gene3D" id="3.20.20.70">
    <property type="entry name" value="Aldolase class I"/>
    <property type="match status" value="1"/>
</dbReference>
<dbReference type="HAMAP" id="MF_01849">
    <property type="entry name" value="RNA_methyltr_RlmN"/>
    <property type="match status" value="1"/>
</dbReference>
<dbReference type="InterPro" id="IPR013785">
    <property type="entry name" value="Aldolase_TIM"/>
</dbReference>
<dbReference type="InterPro" id="IPR040072">
    <property type="entry name" value="Methyltransferase_A"/>
</dbReference>
<dbReference type="InterPro" id="IPR048641">
    <property type="entry name" value="RlmN_N"/>
</dbReference>
<dbReference type="InterPro" id="IPR027492">
    <property type="entry name" value="RNA_MTrfase_RlmN"/>
</dbReference>
<dbReference type="InterPro" id="IPR004383">
    <property type="entry name" value="rRNA_lsu_MTrfase_RlmN/Cfr"/>
</dbReference>
<dbReference type="InterPro" id="IPR007197">
    <property type="entry name" value="rSAM"/>
</dbReference>
<dbReference type="NCBIfam" id="TIGR00048">
    <property type="entry name" value="rRNA_mod_RlmN"/>
    <property type="match status" value="1"/>
</dbReference>
<dbReference type="PANTHER" id="PTHR30544">
    <property type="entry name" value="23S RRNA METHYLTRANSFERASE"/>
    <property type="match status" value="1"/>
</dbReference>
<dbReference type="PANTHER" id="PTHR30544:SF5">
    <property type="entry name" value="RADICAL SAM CORE DOMAIN-CONTAINING PROTEIN"/>
    <property type="match status" value="1"/>
</dbReference>
<dbReference type="Pfam" id="PF04055">
    <property type="entry name" value="Radical_SAM"/>
    <property type="match status" value="1"/>
</dbReference>
<dbReference type="Pfam" id="PF21016">
    <property type="entry name" value="RlmN_N"/>
    <property type="match status" value="1"/>
</dbReference>
<dbReference type="PIRSF" id="PIRSF006004">
    <property type="entry name" value="CHP00048"/>
    <property type="match status" value="1"/>
</dbReference>
<dbReference type="SFLD" id="SFLDF00275">
    <property type="entry name" value="adenosine_C2_methyltransferase"/>
    <property type="match status" value="1"/>
</dbReference>
<dbReference type="SFLD" id="SFLDG01062">
    <property type="entry name" value="methyltransferase_(Class_A)"/>
    <property type="match status" value="1"/>
</dbReference>
<dbReference type="SUPFAM" id="SSF102114">
    <property type="entry name" value="Radical SAM enzymes"/>
    <property type="match status" value="1"/>
</dbReference>
<dbReference type="PROSITE" id="PS51918">
    <property type="entry name" value="RADICAL_SAM"/>
    <property type="match status" value="1"/>
</dbReference>
<comment type="function">
    <text evidence="1">Specifically methylates position 2 of adenine 2503 in 23S rRNA and position 2 of adenine 37 in tRNAs. m2A2503 modification seems to play a crucial role in the proofreading step occurring at the peptidyl transferase center and thus would serve to optimize ribosomal fidelity.</text>
</comment>
<comment type="catalytic activity">
    <reaction evidence="1">
        <text>adenosine(2503) in 23S rRNA + 2 reduced [2Fe-2S]-[ferredoxin] + 2 S-adenosyl-L-methionine = 2-methyladenosine(2503) in 23S rRNA + 5'-deoxyadenosine + L-methionine + 2 oxidized [2Fe-2S]-[ferredoxin] + S-adenosyl-L-homocysteine</text>
        <dbReference type="Rhea" id="RHEA:42916"/>
        <dbReference type="Rhea" id="RHEA-COMP:10000"/>
        <dbReference type="Rhea" id="RHEA-COMP:10001"/>
        <dbReference type="Rhea" id="RHEA-COMP:10152"/>
        <dbReference type="Rhea" id="RHEA-COMP:10282"/>
        <dbReference type="ChEBI" id="CHEBI:17319"/>
        <dbReference type="ChEBI" id="CHEBI:33737"/>
        <dbReference type="ChEBI" id="CHEBI:33738"/>
        <dbReference type="ChEBI" id="CHEBI:57844"/>
        <dbReference type="ChEBI" id="CHEBI:57856"/>
        <dbReference type="ChEBI" id="CHEBI:59789"/>
        <dbReference type="ChEBI" id="CHEBI:74411"/>
        <dbReference type="ChEBI" id="CHEBI:74497"/>
        <dbReference type="EC" id="2.1.1.192"/>
    </reaction>
</comment>
<comment type="catalytic activity">
    <reaction evidence="1">
        <text>adenosine(37) in tRNA + 2 reduced [2Fe-2S]-[ferredoxin] + 2 S-adenosyl-L-methionine = 2-methyladenosine(37) in tRNA + 5'-deoxyadenosine + L-methionine + 2 oxidized [2Fe-2S]-[ferredoxin] + S-adenosyl-L-homocysteine</text>
        <dbReference type="Rhea" id="RHEA:43332"/>
        <dbReference type="Rhea" id="RHEA-COMP:10000"/>
        <dbReference type="Rhea" id="RHEA-COMP:10001"/>
        <dbReference type="Rhea" id="RHEA-COMP:10162"/>
        <dbReference type="Rhea" id="RHEA-COMP:10485"/>
        <dbReference type="ChEBI" id="CHEBI:17319"/>
        <dbReference type="ChEBI" id="CHEBI:33737"/>
        <dbReference type="ChEBI" id="CHEBI:33738"/>
        <dbReference type="ChEBI" id="CHEBI:57844"/>
        <dbReference type="ChEBI" id="CHEBI:57856"/>
        <dbReference type="ChEBI" id="CHEBI:59789"/>
        <dbReference type="ChEBI" id="CHEBI:74411"/>
        <dbReference type="ChEBI" id="CHEBI:74497"/>
        <dbReference type="EC" id="2.1.1.192"/>
    </reaction>
</comment>
<comment type="cofactor">
    <cofactor evidence="1">
        <name>[4Fe-4S] cluster</name>
        <dbReference type="ChEBI" id="CHEBI:49883"/>
    </cofactor>
    <text evidence="1">Binds 1 [4Fe-4S] cluster. The cluster is coordinated with 3 cysteines and an exchangeable S-adenosyl-L-methionine.</text>
</comment>
<comment type="subcellular location">
    <subcellularLocation>
        <location evidence="1">Cytoplasm</location>
    </subcellularLocation>
</comment>
<comment type="miscellaneous">
    <text evidence="1">Reaction proceeds by a ping-pong mechanism involving intermediate methylation of a conserved cysteine residue.</text>
</comment>
<comment type="similarity">
    <text evidence="1">Belongs to the radical SAM superfamily. RlmN family.</text>
</comment>